<proteinExistence type="inferred from homology"/>
<sequence length="288" mass="32152">MKGIILAGGSGTRLYPITRGVSKQLLPVYDKPMIYYPLSVLMLAGIRDILVITAPEDNASFKRLLGDGSDFGISISYAVQPSPDGLAQAFIIGEEFIGNDNVCLVLGDNIFYGQSFTQTLKQAAAQTHGATVFAYQVKNPERFGVVEFNENFRAVSIEEKPQRPKSDWAVTGLYFYDNRAVEFAKQLKPSARGELEISDLNRMYLEDGSLSVQILGRGFAWLDTGTHESLHEAASFVQTVQNIQNLHIACLEEIAWRNGWLSDEKLEELARTMAKNQYGQYLLRLLKK</sequence>
<keyword id="KW-0460">Magnesium</keyword>
<keyword id="KW-0479">Metal-binding</keyword>
<keyword id="KW-0548">Nucleotidyltransferase</keyword>
<keyword id="KW-0808">Transferase</keyword>
<protein>
    <recommendedName>
        <fullName>Glucose-1-phosphate thymidylyltransferase</fullName>
        <ecNumber evidence="1">2.7.7.24</ecNumber>
    </recommendedName>
    <alternativeName>
        <fullName>dTDP-glucose pyrophosphorylase</fullName>
    </alternativeName>
    <alternativeName>
        <fullName>dTDP-glucose synthase</fullName>
    </alternativeName>
</protein>
<evidence type="ECO:0000250" key="1">
    <source>
        <dbReference type="UniProtKB" id="P61887"/>
    </source>
</evidence>
<evidence type="ECO:0000305" key="2"/>
<feature type="chain" id="PRO_0000207997" description="Glucose-1-phosphate thymidylyltransferase">
    <location>
        <begin position="1"/>
        <end position="288"/>
    </location>
</feature>
<feature type="binding site" evidence="1">
    <location>
        <position position="108"/>
    </location>
    <ligand>
        <name>Mg(2+)</name>
        <dbReference type="ChEBI" id="CHEBI:18420"/>
    </ligand>
</feature>
<feature type="binding site" evidence="1">
    <location>
        <position position="223"/>
    </location>
    <ligand>
        <name>Mg(2+)</name>
        <dbReference type="ChEBI" id="CHEBI:18420"/>
    </ligand>
</feature>
<gene>
    <name type="primary">rmlA1</name>
    <name type="synonym">rfbA1</name>
    <name type="ordered locus">NMA0188</name>
</gene>
<gene>
    <name type="primary">rmlA2</name>
    <name type="synonym">rfbA2</name>
    <name type="ordered locus">NMA0205</name>
</gene>
<accession>P57040</accession>
<accession>A1IP45</accession>
<dbReference type="EC" id="2.7.7.24" evidence="1"/>
<dbReference type="EMBL" id="AL157959">
    <property type="protein sequence ID" value="CAM07503.1"/>
    <property type="molecule type" value="Genomic_DNA"/>
</dbReference>
<dbReference type="EMBL" id="AL157959">
    <property type="protein sequence ID" value="CAM07519.1"/>
    <property type="molecule type" value="Genomic_DNA"/>
</dbReference>
<dbReference type="PIR" id="H82014">
    <property type="entry name" value="H82014"/>
</dbReference>
<dbReference type="RefSeq" id="WP_010981057.1">
    <property type="nucleotide sequence ID" value="NC_003116.1"/>
</dbReference>
<dbReference type="SMR" id="P57040"/>
<dbReference type="EnsemblBacteria" id="CAM07503">
    <property type="protein sequence ID" value="CAM07503"/>
    <property type="gene ID" value="NMA0188"/>
</dbReference>
<dbReference type="EnsemblBacteria" id="CAM07519">
    <property type="protein sequence ID" value="CAM07519"/>
    <property type="gene ID" value="NMA0205"/>
</dbReference>
<dbReference type="KEGG" id="nma:NMA0188"/>
<dbReference type="KEGG" id="nma:NMA0205"/>
<dbReference type="HOGENOM" id="CLU_029499_9_0_4"/>
<dbReference type="Proteomes" id="UP000000626">
    <property type="component" value="Chromosome"/>
</dbReference>
<dbReference type="GO" id="GO:0008879">
    <property type="term" value="F:glucose-1-phosphate thymidylyltransferase activity"/>
    <property type="evidence" value="ECO:0007669"/>
    <property type="project" value="UniProtKB-EC"/>
</dbReference>
<dbReference type="GO" id="GO:0046872">
    <property type="term" value="F:metal ion binding"/>
    <property type="evidence" value="ECO:0007669"/>
    <property type="project" value="UniProtKB-KW"/>
</dbReference>
<dbReference type="GO" id="GO:0009058">
    <property type="term" value="P:biosynthetic process"/>
    <property type="evidence" value="ECO:0007669"/>
    <property type="project" value="InterPro"/>
</dbReference>
<dbReference type="CDD" id="cd02538">
    <property type="entry name" value="G1P_TT_short"/>
    <property type="match status" value="1"/>
</dbReference>
<dbReference type="FunFam" id="3.90.550.10:FF:000023">
    <property type="entry name" value="Glucose-1-phosphate thymidylyltransferase"/>
    <property type="match status" value="1"/>
</dbReference>
<dbReference type="Gene3D" id="3.90.550.10">
    <property type="entry name" value="Spore Coat Polysaccharide Biosynthesis Protein SpsA, Chain A"/>
    <property type="match status" value="1"/>
</dbReference>
<dbReference type="InterPro" id="IPR005907">
    <property type="entry name" value="G1P_thy_trans_s"/>
</dbReference>
<dbReference type="InterPro" id="IPR005835">
    <property type="entry name" value="NTP_transferase_dom"/>
</dbReference>
<dbReference type="InterPro" id="IPR029044">
    <property type="entry name" value="Nucleotide-diphossugar_trans"/>
</dbReference>
<dbReference type="NCBIfam" id="TIGR01207">
    <property type="entry name" value="rmlA"/>
    <property type="match status" value="1"/>
</dbReference>
<dbReference type="PANTHER" id="PTHR43532">
    <property type="entry name" value="GLUCOSE-1-PHOSPHATE THYMIDYLYLTRANSFERASE"/>
    <property type="match status" value="1"/>
</dbReference>
<dbReference type="PANTHER" id="PTHR43532:SF4">
    <property type="entry name" value="GLUCOSE-1-PHOSPHATE THYMIDYLYLTRANSFERASE 2"/>
    <property type="match status" value="1"/>
</dbReference>
<dbReference type="Pfam" id="PF00483">
    <property type="entry name" value="NTP_transferase"/>
    <property type="match status" value="1"/>
</dbReference>
<dbReference type="SUPFAM" id="SSF53448">
    <property type="entry name" value="Nucleotide-diphospho-sugar transferases"/>
    <property type="match status" value="1"/>
</dbReference>
<name>RMLA_NEIMA</name>
<comment type="function">
    <text evidence="1">Catalyzes the formation of dTDP-glucose, from dTTP and glucose 1-phosphate, as well as its pyrophosphorolysis.</text>
</comment>
<comment type="catalytic activity">
    <reaction evidence="1">
        <text>dTTP + alpha-D-glucose 1-phosphate + H(+) = dTDP-alpha-D-glucose + diphosphate</text>
        <dbReference type="Rhea" id="RHEA:15225"/>
        <dbReference type="ChEBI" id="CHEBI:15378"/>
        <dbReference type="ChEBI" id="CHEBI:33019"/>
        <dbReference type="ChEBI" id="CHEBI:37568"/>
        <dbReference type="ChEBI" id="CHEBI:57477"/>
        <dbReference type="ChEBI" id="CHEBI:58601"/>
        <dbReference type="EC" id="2.7.7.24"/>
    </reaction>
</comment>
<comment type="cofactor">
    <cofactor evidence="1">
        <name>Mg(2+)</name>
        <dbReference type="ChEBI" id="CHEBI:18420"/>
    </cofactor>
    <text evidence="1">Binds 1 Mg(2+) ion per subunit.</text>
</comment>
<comment type="subunit">
    <text evidence="1">Homotetramer.</text>
</comment>
<comment type="similarity">
    <text evidence="2">Belongs to the glucose-1-phosphate thymidylyltransferase family.</text>
</comment>
<reference key="1">
    <citation type="journal article" date="2000" name="Nature">
        <title>Complete DNA sequence of a serogroup A strain of Neisseria meningitidis Z2491.</title>
        <authorList>
            <person name="Parkhill J."/>
            <person name="Achtman M."/>
            <person name="James K.D."/>
            <person name="Bentley S.D."/>
            <person name="Churcher C.M."/>
            <person name="Klee S.R."/>
            <person name="Morelli G."/>
            <person name="Basham D."/>
            <person name="Brown D."/>
            <person name="Chillingworth T."/>
            <person name="Davies R.M."/>
            <person name="Davis P."/>
            <person name="Devlin K."/>
            <person name="Feltwell T."/>
            <person name="Hamlin N."/>
            <person name="Holroyd S."/>
            <person name="Jagels K."/>
            <person name="Leather S."/>
            <person name="Moule S."/>
            <person name="Mungall K.L."/>
            <person name="Quail M.A."/>
            <person name="Rajandream M.A."/>
            <person name="Rutherford K.M."/>
            <person name="Simmonds M."/>
            <person name="Skelton J."/>
            <person name="Whitehead S."/>
            <person name="Spratt B.G."/>
            <person name="Barrell B.G."/>
        </authorList>
    </citation>
    <scope>NUCLEOTIDE SEQUENCE [LARGE SCALE GENOMIC DNA]</scope>
    <source>
        <strain>DSM 15465 / Z2491</strain>
    </source>
</reference>
<organism>
    <name type="scientific">Neisseria meningitidis serogroup A / serotype 4A (strain DSM 15465 / Z2491)</name>
    <dbReference type="NCBI Taxonomy" id="122587"/>
    <lineage>
        <taxon>Bacteria</taxon>
        <taxon>Pseudomonadati</taxon>
        <taxon>Pseudomonadota</taxon>
        <taxon>Betaproteobacteria</taxon>
        <taxon>Neisseriales</taxon>
        <taxon>Neisseriaceae</taxon>
        <taxon>Neisseria</taxon>
    </lineage>
</organism>